<evidence type="ECO:0000255" key="1">
    <source>
        <dbReference type="HAMAP-Rule" id="MF_00227"/>
    </source>
</evidence>
<feature type="chain" id="PRO_1000078199" description="Ribonuclease P protein component">
    <location>
        <begin position="1"/>
        <end position="120"/>
    </location>
</feature>
<sequence length="120" mass="13634">MGLPQIHRLKHRQDFQAVYGTGKRYHGSHLTLISLEDSCPDAPGPSRFGISISKKVSKKAVVRNRLKRQIRAVIRELLPEIAAGWRGIIIIRPGAIECNYEHFLRELKQLLVKANIIHGH</sequence>
<accession>B0JN62</accession>
<keyword id="KW-0255">Endonuclease</keyword>
<keyword id="KW-0378">Hydrolase</keyword>
<keyword id="KW-0540">Nuclease</keyword>
<keyword id="KW-0694">RNA-binding</keyword>
<keyword id="KW-0819">tRNA processing</keyword>
<dbReference type="EC" id="3.1.26.5" evidence="1"/>
<dbReference type="EMBL" id="AP009552">
    <property type="protein sequence ID" value="BAG00226.1"/>
    <property type="molecule type" value="Genomic_DNA"/>
</dbReference>
<dbReference type="RefSeq" id="WP_002797764.1">
    <property type="nucleotide sequence ID" value="NC_010296.1"/>
</dbReference>
<dbReference type="SMR" id="B0JN62"/>
<dbReference type="STRING" id="449447.MAE_04040"/>
<dbReference type="PaxDb" id="449447-MAE_04040"/>
<dbReference type="EnsemblBacteria" id="BAG00226">
    <property type="protein sequence ID" value="BAG00226"/>
    <property type="gene ID" value="MAE_04040"/>
</dbReference>
<dbReference type="KEGG" id="mar:MAE_04040"/>
<dbReference type="eggNOG" id="COG0594">
    <property type="taxonomic scope" value="Bacteria"/>
</dbReference>
<dbReference type="HOGENOM" id="CLU_117179_9_0_3"/>
<dbReference type="BioCyc" id="MAER449447:MAE_RS01845-MONOMER"/>
<dbReference type="Proteomes" id="UP000001510">
    <property type="component" value="Chromosome"/>
</dbReference>
<dbReference type="GO" id="GO:0030677">
    <property type="term" value="C:ribonuclease P complex"/>
    <property type="evidence" value="ECO:0007669"/>
    <property type="project" value="TreeGrafter"/>
</dbReference>
<dbReference type="GO" id="GO:0042781">
    <property type="term" value="F:3'-tRNA processing endoribonuclease activity"/>
    <property type="evidence" value="ECO:0007669"/>
    <property type="project" value="TreeGrafter"/>
</dbReference>
<dbReference type="GO" id="GO:0004526">
    <property type="term" value="F:ribonuclease P activity"/>
    <property type="evidence" value="ECO:0007669"/>
    <property type="project" value="UniProtKB-UniRule"/>
</dbReference>
<dbReference type="GO" id="GO:0000049">
    <property type="term" value="F:tRNA binding"/>
    <property type="evidence" value="ECO:0007669"/>
    <property type="project" value="UniProtKB-UniRule"/>
</dbReference>
<dbReference type="GO" id="GO:0001682">
    <property type="term" value="P:tRNA 5'-leader removal"/>
    <property type="evidence" value="ECO:0007669"/>
    <property type="project" value="UniProtKB-UniRule"/>
</dbReference>
<dbReference type="Gene3D" id="3.30.230.10">
    <property type="match status" value="1"/>
</dbReference>
<dbReference type="HAMAP" id="MF_00227">
    <property type="entry name" value="RNase_P"/>
    <property type="match status" value="1"/>
</dbReference>
<dbReference type="InterPro" id="IPR020568">
    <property type="entry name" value="Ribosomal_Su5_D2-typ_SF"/>
</dbReference>
<dbReference type="InterPro" id="IPR014721">
    <property type="entry name" value="Ribsml_uS5_D2-typ_fold_subgr"/>
</dbReference>
<dbReference type="InterPro" id="IPR000100">
    <property type="entry name" value="RNase_P"/>
</dbReference>
<dbReference type="InterPro" id="IPR020539">
    <property type="entry name" value="RNase_P_CS"/>
</dbReference>
<dbReference type="NCBIfam" id="TIGR00188">
    <property type="entry name" value="rnpA"/>
    <property type="match status" value="1"/>
</dbReference>
<dbReference type="PANTHER" id="PTHR33992">
    <property type="entry name" value="RIBONUCLEASE P PROTEIN COMPONENT"/>
    <property type="match status" value="1"/>
</dbReference>
<dbReference type="PANTHER" id="PTHR33992:SF1">
    <property type="entry name" value="RIBONUCLEASE P PROTEIN COMPONENT"/>
    <property type="match status" value="1"/>
</dbReference>
<dbReference type="Pfam" id="PF00825">
    <property type="entry name" value="Ribonuclease_P"/>
    <property type="match status" value="1"/>
</dbReference>
<dbReference type="SUPFAM" id="SSF54211">
    <property type="entry name" value="Ribosomal protein S5 domain 2-like"/>
    <property type="match status" value="1"/>
</dbReference>
<dbReference type="PROSITE" id="PS00648">
    <property type="entry name" value="RIBONUCLEASE_P"/>
    <property type="match status" value="1"/>
</dbReference>
<proteinExistence type="inferred from homology"/>
<comment type="function">
    <text evidence="1">RNaseP catalyzes the removal of the 5'-leader sequence from pre-tRNA to produce the mature 5'-terminus. It can also cleave other RNA substrates such as 4.5S RNA. The protein component plays an auxiliary but essential role in vivo by binding to the 5'-leader sequence and broadening the substrate specificity of the ribozyme.</text>
</comment>
<comment type="catalytic activity">
    <reaction evidence="1">
        <text>Endonucleolytic cleavage of RNA, removing 5'-extranucleotides from tRNA precursor.</text>
        <dbReference type="EC" id="3.1.26.5"/>
    </reaction>
</comment>
<comment type="subunit">
    <text evidence="1">Consists of a catalytic RNA component (M1 or rnpB) and a protein subunit.</text>
</comment>
<comment type="similarity">
    <text evidence="1">Belongs to the RnpA family.</text>
</comment>
<organism>
    <name type="scientific">Microcystis aeruginosa (strain NIES-843 / IAM M-2473)</name>
    <dbReference type="NCBI Taxonomy" id="449447"/>
    <lineage>
        <taxon>Bacteria</taxon>
        <taxon>Bacillati</taxon>
        <taxon>Cyanobacteriota</taxon>
        <taxon>Cyanophyceae</taxon>
        <taxon>Oscillatoriophycideae</taxon>
        <taxon>Chroococcales</taxon>
        <taxon>Microcystaceae</taxon>
        <taxon>Microcystis</taxon>
    </lineage>
</organism>
<name>RNPA_MICAN</name>
<reference key="1">
    <citation type="journal article" date="2007" name="DNA Res.">
        <title>Complete genomic structure of the bloom-forming toxic cyanobacterium Microcystis aeruginosa NIES-843.</title>
        <authorList>
            <person name="Kaneko T."/>
            <person name="Nakajima N."/>
            <person name="Okamoto S."/>
            <person name="Suzuki I."/>
            <person name="Tanabe Y."/>
            <person name="Tamaoki M."/>
            <person name="Nakamura Y."/>
            <person name="Kasai F."/>
            <person name="Watanabe A."/>
            <person name="Kawashima K."/>
            <person name="Kishida Y."/>
            <person name="Ono A."/>
            <person name="Shimizu Y."/>
            <person name="Takahashi C."/>
            <person name="Minami C."/>
            <person name="Fujishiro T."/>
            <person name="Kohara M."/>
            <person name="Katoh M."/>
            <person name="Nakazaki N."/>
            <person name="Nakayama S."/>
            <person name="Yamada M."/>
            <person name="Tabata S."/>
            <person name="Watanabe M.M."/>
        </authorList>
    </citation>
    <scope>NUCLEOTIDE SEQUENCE [LARGE SCALE GENOMIC DNA]</scope>
    <source>
        <strain>NIES-843 / IAM M-247</strain>
    </source>
</reference>
<protein>
    <recommendedName>
        <fullName evidence="1">Ribonuclease P protein component</fullName>
        <shortName evidence="1">RNase P protein</shortName>
        <shortName evidence="1">RNaseP protein</shortName>
        <ecNumber evidence="1">3.1.26.5</ecNumber>
    </recommendedName>
    <alternativeName>
        <fullName evidence="1">Protein C5</fullName>
    </alternativeName>
</protein>
<gene>
    <name evidence="1" type="primary">rnpA</name>
    <name type="ordered locus">MAE_04040</name>
</gene>